<proteinExistence type="evidence at protein level"/>
<comment type="function">
    <text evidence="1">Binds to target gene promoters, including NKX2-5 and SYCE1, but not GATA4, and may be involved in the maintenance of the active epigenetic status of these genes.</text>
</comment>
<comment type="subunit">
    <text evidence="1">Interacts with DPPA4.</text>
</comment>
<comment type="interaction">
    <interactant intactId="EBI-741400">
        <id>Q7Z7J5</id>
    </interactant>
    <interactant intactId="EBI-348399">
        <id>P22607</id>
        <label>FGFR3</label>
    </interactant>
    <organismsDiffer>false</organismsDiffer>
    <experiments>3</experiments>
</comment>
<comment type="interaction">
    <interactant intactId="EBI-741400">
        <id>Q7Z7J5</id>
    </interactant>
    <interactant intactId="EBI-8285963">
        <id>Q14957</id>
        <label>GRIN2C</label>
    </interactant>
    <organismsDiffer>false</organismsDiffer>
    <experiments>3</experiments>
</comment>
<comment type="interaction">
    <interactant intactId="EBI-741400">
        <id>Q7Z7J5</id>
    </interactant>
    <interactant intactId="EBI-351506">
        <id>P06396</id>
        <label>GSN</label>
    </interactant>
    <organismsDiffer>false</organismsDiffer>
    <experiments>3</experiments>
</comment>
<comment type="interaction">
    <interactant intactId="EBI-741400">
        <id>Q7Z7J5</id>
    </interactant>
    <interactant intactId="EBI-10180829">
        <id>Q7KZS0</id>
        <label>UBE2I</label>
    </interactant>
    <organismsDiffer>false</organismsDiffer>
    <experiments>3</experiments>
</comment>
<comment type="interaction">
    <interactant intactId="EBI-741400">
        <id>Q7Z7J5</id>
    </interactant>
    <interactant intactId="EBI-741480">
        <id>Q9UMX0</id>
        <label>UBQLN1</label>
    </interactant>
    <organismsDiffer>false</organismsDiffer>
    <experiments>3</experiments>
</comment>
<comment type="interaction">
    <interactant intactId="EBI-741400">
        <id>Q7Z7J5</id>
    </interactant>
    <interactant intactId="EBI-25900580">
        <id>Q9Y649</id>
    </interactant>
    <organismsDiffer>false</organismsDiffer>
    <experiments>3</experiments>
</comment>
<comment type="subcellular location">
    <subcellularLocation>
        <location evidence="4">Nucleus</location>
    </subcellularLocation>
</comment>
<comment type="tissue specificity">
    <text evidence="4">Expressed in embryonic stem cells. No expression is seen in 5 months embryo, mesenchymal stem cells, embryonic fibrocytes and adult tissues.</text>
</comment>
<accession>Q7Z7J5</accession>
<accession>Q8WVF0</accession>
<name>DPPA2_HUMAN</name>
<dbReference type="EMBL" id="AY283672">
    <property type="protein sequence ID" value="AAP37285.1"/>
    <property type="molecule type" value="mRNA"/>
</dbReference>
<dbReference type="EMBL" id="BC018070">
    <property type="protein sequence ID" value="AAH18070.1"/>
    <property type="molecule type" value="mRNA"/>
</dbReference>
<dbReference type="CCDS" id="CCDS2956.1"/>
<dbReference type="RefSeq" id="NP_620170.3">
    <property type="nucleotide sequence ID" value="NM_138815.3"/>
</dbReference>
<dbReference type="RefSeq" id="XP_011510746.1">
    <property type="nucleotide sequence ID" value="XM_011512444.4"/>
</dbReference>
<dbReference type="RefSeq" id="XP_011510747.1">
    <property type="nucleotide sequence ID" value="XM_011512445.3"/>
</dbReference>
<dbReference type="RefSeq" id="XP_054201324.1">
    <property type="nucleotide sequence ID" value="XM_054345349.1"/>
</dbReference>
<dbReference type="RefSeq" id="XP_054201325.1">
    <property type="nucleotide sequence ID" value="XM_054345350.1"/>
</dbReference>
<dbReference type="SMR" id="Q7Z7J5"/>
<dbReference type="BioGRID" id="127407">
    <property type="interactions" value="42"/>
</dbReference>
<dbReference type="FunCoup" id="Q7Z7J5">
    <property type="interactions" value="274"/>
</dbReference>
<dbReference type="IntAct" id="Q7Z7J5">
    <property type="interactions" value="22"/>
</dbReference>
<dbReference type="STRING" id="9606.ENSP00000417710"/>
<dbReference type="iPTMnet" id="Q7Z7J5"/>
<dbReference type="PhosphoSitePlus" id="Q7Z7J5"/>
<dbReference type="SwissPalm" id="Q7Z7J5"/>
<dbReference type="BioMuta" id="DPPA2"/>
<dbReference type="DMDM" id="116241341"/>
<dbReference type="jPOST" id="Q7Z7J5"/>
<dbReference type="MassIVE" id="Q7Z7J5"/>
<dbReference type="PaxDb" id="9606-ENSP00000417710"/>
<dbReference type="PeptideAtlas" id="Q7Z7J5"/>
<dbReference type="ProteomicsDB" id="69552"/>
<dbReference type="Antibodypedia" id="32413">
    <property type="antibodies" value="307 antibodies from 31 providers"/>
</dbReference>
<dbReference type="DNASU" id="151871"/>
<dbReference type="Ensembl" id="ENST00000478945.1">
    <property type="protein sequence ID" value="ENSP00000417710.1"/>
    <property type="gene ID" value="ENSG00000163530.4"/>
</dbReference>
<dbReference type="GeneID" id="151871"/>
<dbReference type="KEGG" id="hsa:151871"/>
<dbReference type="MANE-Select" id="ENST00000478945.1">
    <property type="protein sequence ID" value="ENSP00000417710.1"/>
    <property type="RefSeq nucleotide sequence ID" value="NM_138815.4"/>
    <property type="RefSeq protein sequence ID" value="NP_620170.3"/>
</dbReference>
<dbReference type="UCSC" id="uc003dxo.3">
    <property type="organism name" value="human"/>
</dbReference>
<dbReference type="AGR" id="HGNC:19197"/>
<dbReference type="CTD" id="151871"/>
<dbReference type="DisGeNET" id="151871"/>
<dbReference type="GeneCards" id="DPPA2"/>
<dbReference type="HGNC" id="HGNC:19197">
    <property type="gene designation" value="DPPA2"/>
</dbReference>
<dbReference type="HPA" id="ENSG00000163530">
    <property type="expression patterns" value="Tissue enriched (testis)"/>
</dbReference>
<dbReference type="MIM" id="614445">
    <property type="type" value="gene"/>
</dbReference>
<dbReference type="neXtProt" id="NX_Q7Z7J5"/>
<dbReference type="OpenTargets" id="ENSG00000163530"/>
<dbReference type="PharmGKB" id="PA134944028"/>
<dbReference type="VEuPathDB" id="HostDB:ENSG00000163530"/>
<dbReference type="eggNOG" id="ENOG502RVK6">
    <property type="taxonomic scope" value="Eukaryota"/>
</dbReference>
<dbReference type="GeneTree" id="ENSGT00390000004871"/>
<dbReference type="HOGENOM" id="CLU_080062_1_0_1"/>
<dbReference type="InParanoid" id="Q7Z7J5"/>
<dbReference type="OMA" id="FCPKHSC"/>
<dbReference type="OrthoDB" id="5964929at2759"/>
<dbReference type="PAN-GO" id="Q7Z7J5">
    <property type="GO annotations" value="3 GO annotations based on evolutionary models"/>
</dbReference>
<dbReference type="PhylomeDB" id="Q7Z7J5"/>
<dbReference type="TreeFam" id="TF338129"/>
<dbReference type="PathwayCommons" id="Q7Z7J5"/>
<dbReference type="Reactome" id="R-HSA-9819196">
    <property type="pathway name" value="Zygotic genome activation (ZGA)"/>
</dbReference>
<dbReference type="SignaLink" id="Q7Z7J5"/>
<dbReference type="BioGRID-ORCS" id="151871">
    <property type="hits" value="49 hits in 1141 CRISPR screens"/>
</dbReference>
<dbReference type="ChiTaRS" id="DPPA2">
    <property type="organism name" value="human"/>
</dbReference>
<dbReference type="GeneWiki" id="Developmental_pluripotency_associated_2"/>
<dbReference type="GenomeRNAi" id="151871"/>
<dbReference type="Pharos" id="Q7Z7J5">
    <property type="development level" value="Tbio"/>
</dbReference>
<dbReference type="PRO" id="PR:Q7Z7J5"/>
<dbReference type="Proteomes" id="UP000005640">
    <property type="component" value="Chromosome 3"/>
</dbReference>
<dbReference type="RNAct" id="Q7Z7J5">
    <property type="molecule type" value="protein"/>
</dbReference>
<dbReference type="Bgee" id="ENSG00000163530">
    <property type="expression patterns" value="Expressed in primordial germ cell in gonad and 9 other cell types or tissues"/>
</dbReference>
<dbReference type="GO" id="GO:0005654">
    <property type="term" value="C:nucleoplasm"/>
    <property type="evidence" value="ECO:0000314"/>
    <property type="project" value="HPA"/>
</dbReference>
<dbReference type="GO" id="GO:0005634">
    <property type="term" value="C:nucleus"/>
    <property type="evidence" value="ECO:0000318"/>
    <property type="project" value="GO_Central"/>
</dbReference>
<dbReference type="GO" id="GO:0003682">
    <property type="term" value="F:chromatin binding"/>
    <property type="evidence" value="ECO:0000318"/>
    <property type="project" value="GO_Central"/>
</dbReference>
<dbReference type="GO" id="GO:0048731">
    <property type="term" value="P:system development"/>
    <property type="evidence" value="ECO:0000318"/>
    <property type="project" value="GO_Central"/>
</dbReference>
<dbReference type="InterPro" id="IPR039590">
    <property type="entry name" value="Dppa2/4"/>
</dbReference>
<dbReference type="InterPro" id="IPR025891">
    <property type="entry name" value="Dppa2/4_C_dom"/>
</dbReference>
<dbReference type="InterPro" id="IPR025892">
    <property type="entry name" value="Dppa2/4_central_dom"/>
</dbReference>
<dbReference type="InterPro" id="IPR003034">
    <property type="entry name" value="SAP_dom"/>
</dbReference>
<dbReference type="PANTHER" id="PTHR16073">
    <property type="entry name" value="DCR DOMAIN-CONTAINING PROTEIN"/>
    <property type="match status" value="1"/>
</dbReference>
<dbReference type="PANTHER" id="PTHR16073:SF10">
    <property type="entry name" value="DEVELOPMENTAL PLURIPOTENCY-ASSOCIATED PROTEIN 2"/>
    <property type="match status" value="1"/>
</dbReference>
<dbReference type="Pfam" id="PF14047">
    <property type="entry name" value="DCR"/>
    <property type="match status" value="1"/>
</dbReference>
<dbReference type="Pfam" id="PF14049">
    <property type="entry name" value="Dppa2_A"/>
    <property type="match status" value="1"/>
</dbReference>
<dbReference type="PROSITE" id="PS50800">
    <property type="entry name" value="SAP"/>
    <property type="match status" value="1"/>
</dbReference>
<keyword id="KW-0539">Nucleus</keyword>
<keyword id="KW-1267">Proteomics identification</keyword>
<keyword id="KW-1185">Reference proteome</keyword>
<keyword id="KW-0804">Transcription</keyword>
<keyword id="KW-0805">Transcription regulation</keyword>
<gene>
    <name type="primary">DPPA2</name>
    <name type="synonym">PESCRG1</name>
</gene>
<protein>
    <recommendedName>
        <fullName>Developmental pluripotency-associated protein 2</fullName>
    </recommendedName>
    <alternativeName>
        <fullName>Pluripotent embryonic stem cell-related gene 1 protein</fullName>
    </alternativeName>
</protein>
<evidence type="ECO:0000250" key="1"/>
<evidence type="ECO:0000255" key="2">
    <source>
        <dbReference type="PROSITE-ProRule" id="PRU00186"/>
    </source>
</evidence>
<evidence type="ECO:0000256" key="3">
    <source>
        <dbReference type="SAM" id="MobiDB-lite"/>
    </source>
</evidence>
<evidence type="ECO:0000269" key="4">
    <source>
    </source>
</evidence>
<evidence type="ECO:0000305" key="5"/>
<feature type="chain" id="PRO_0000239263" description="Developmental pluripotency-associated protein 2">
    <location>
        <begin position="1"/>
        <end position="298"/>
    </location>
</feature>
<feature type="domain" description="SAP" evidence="2">
    <location>
        <begin position="92"/>
        <end position="126"/>
    </location>
</feature>
<feature type="region of interest" description="Disordered" evidence="3">
    <location>
        <begin position="36"/>
        <end position="61"/>
    </location>
</feature>
<feature type="sequence variant" id="VAR_028087" description="In dbSNP:rs9809030.">
    <original>R</original>
    <variation>Q</variation>
    <location>
        <position position="131"/>
    </location>
</feature>
<feature type="sequence conflict" description="In Ref. 1; AAP37285." evidence="5" ref="1">
    <original>L</original>
    <variation>S</variation>
    <location>
        <position position="89"/>
    </location>
</feature>
<reference key="1">
    <citation type="journal article" date="2004" name="Zhonghua Yi Xue Yi Chuan Xue Za Zhi">
        <title>Molecular cloning and characterization analysis of HPESCRG1, a novel gene expressed specifically in human embryonic stem cell.</title>
        <authorList>
            <person name="Du J."/>
            <person name="Lin G."/>
            <person name="Nie Z.Y."/>
            <person name="Lu G.X."/>
        </authorList>
    </citation>
    <scope>NUCLEOTIDE SEQUENCE [MRNA]</scope>
    <scope>SUBCELLULAR LOCATION</scope>
    <scope>TISSUE SPECIFICITY</scope>
</reference>
<reference key="2">
    <citation type="journal article" date="2004" name="Genome Res.">
        <title>The status, quality, and expansion of the NIH full-length cDNA project: the Mammalian Gene Collection (MGC).</title>
        <authorList>
            <consortium name="The MGC Project Team"/>
        </authorList>
    </citation>
    <scope>NUCLEOTIDE SEQUENCE [LARGE SCALE MRNA]</scope>
    <source>
        <tissue>Brain</tissue>
    </source>
</reference>
<sequence length="298" mass="33784">MSDANLDSSKKNFLEGEVDDEESVILTLVPVKDDANMEQMEPSVSSTSDVKLEKPKKYNPGHLLQTNEQFTAPQKARCKIPALPLPTILPPINKVCRDTLRDWCQQLGLSTNGKKIEVYLRLHRHAYPEQRQDMPEMSQETRLQRCSRKRKAVTKRARLQRSYEMNERAEETNTVEVITSAPGAMLASWARIAARAVQPKALNSCSIPVSVEAFLMQASGVRWCVVHGRLLSADTKGWVRLQFHAGQAWVPTTHRRMISLFLLPACIFPSPGIEDNMLCPDCAKRNKKMMKRLMTVEK</sequence>
<organism>
    <name type="scientific">Homo sapiens</name>
    <name type="common">Human</name>
    <dbReference type="NCBI Taxonomy" id="9606"/>
    <lineage>
        <taxon>Eukaryota</taxon>
        <taxon>Metazoa</taxon>
        <taxon>Chordata</taxon>
        <taxon>Craniata</taxon>
        <taxon>Vertebrata</taxon>
        <taxon>Euteleostomi</taxon>
        <taxon>Mammalia</taxon>
        <taxon>Eutheria</taxon>
        <taxon>Euarchontoglires</taxon>
        <taxon>Primates</taxon>
        <taxon>Haplorrhini</taxon>
        <taxon>Catarrhini</taxon>
        <taxon>Hominidae</taxon>
        <taxon>Homo</taxon>
    </lineage>
</organism>